<protein>
    <recommendedName>
        <fullName evidence="1">3-dehydroquinate synthase</fullName>
        <shortName evidence="1">DHQS</shortName>
        <ecNumber evidence="1">4.2.3.4</ecNumber>
    </recommendedName>
</protein>
<comment type="function">
    <text evidence="1">Catalyzes the conversion of 3-deoxy-D-arabino-heptulosonate 7-phosphate (DAHP) to dehydroquinate (DHQ).</text>
</comment>
<comment type="catalytic activity">
    <reaction evidence="1">
        <text>7-phospho-2-dehydro-3-deoxy-D-arabino-heptonate = 3-dehydroquinate + phosphate</text>
        <dbReference type="Rhea" id="RHEA:21968"/>
        <dbReference type="ChEBI" id="CHEBI:32364"/>
        <dbReference type="ChEBI" id="CHEBI:43474"/>
        <dbReference type="ChEBI" id="CHEBI:58394"/>
        <dbReference type="EC" id="4.2.3.4"/>
    </reaction>
</comment>
<comment type="cofactor">
    <cofactor evidence="1">
        <name>Co(2+)</name>
        <dbReference type="ChEBI" id="CHEBI:48828"/>
    </cofactor>
    <cofactor evidence="1">
        <name>Zn(2+)</name>
        <dbReference type="ChEBI" id="CHEBI:29105"/>
    </cofactor>
    <text evidence="1">Binds 1 divalent metal cation per subunit. Can use either Co(2+) or Zn(2+).</text>
</comment>
<comment type="cofactor">
    <cofactor evidence="1">
        <name>NAD(+)</name>
        <dbReference type="ChEBI" id="CHEBI:57540"/>
    </cofactor>
</comment>
<comment type="pathway">
    <text evidence="1">Metabolic intermediate biosynthesis; chorismate biosynthesis; chorismate from D-erythrose 4-phosphate and phosphoenolpyruvate: step 2/7.</text>
</comment>
<comment type="subcellular location">
    <subcellularLocation>
        <location evidence="1">Cytoplasm</location>
    </subcellularLocation>
</comment>
<comment type="similarity">
    <text evidence="1">Belongs to the sugar phosphate cyclases superfamily. Dehydroquinate synthase family.</text>
</comment>
<sequence>MQQIQVQLGDRSYPIYIGQDLMNDSELFARYLTNKKALIVSNDTIAPLYLQQIQQAMSACARIETVILPDGEKFKDLQHLDYIFTELLEHNFARDSVLVALGGGVVGDMTGFAAACYQRGIEFIQVPTTLLSQVDSSVGGKTAVNHPLGKNMIGAFYQPKSVIIDTFCLQTLPANEFAAGMAEVIKYGIIWDADFFQWLEANVDALKSLQTDALNYAIAKCCQIKADVVAQDETEQGVRALLNLGHTFGHAIEAEMGYGVWLHGEAVSAGTVLAAQTAYKLNLLDEQSVERICRLMQAFDLPITAPESMGFEQFIKHMRRDKKVLGGKIRLVLPTEIGKADVFSDVSEDLLKQVISCV</sequence>
<keyword id="KW-0028">Amino-acid biosynthesis</keyword>
<keyword id="KW-0057">Aromatic amino acid biosynthesis</keyword>
<keyword id="KW-0170">Cobalt</keyword>
<keyword id="KW-0963">Cytoplasm</keyword>
<keyword id="KW-0456">Lyase</keyword>
<keyword id="KW-0479">Metal-binding</keyword>
<keyword id="KW-0520">NAD</keyword>
<keyword id="KW-0547">Nucleotide-binding</keyword>
<keyword id="KW-1185">Reference proteome</keyword>
<keyword id="KW-0862">Zinc</keyword>
<dbReference type="EC" id="4.2.3.4" evidence="1"/>
<dbReference type="EMBL" id="CP000447">
    <property type="protein sequence ID" value="ABI70239.1"/>
    <property type="molecule type" value="Genomic_DNA"/>
</dbReference>
<dbReference type="RefSeq" id="WP_011635866.1">
    <property type="nucleotide sequence ID" value="NC_008345.1"/>
</dbReference>
<dbReference type="SMR" id="Q088S6"/>
<dbReference type="STRING" id="318167.Sfri_0376"/>
<dbReference type="KEGG" id="sfr:Sfri_0376"/>
<dbReference type="eggNOG" id="COG0337">
    <property type="taxonomic scope" value="Bacteria"/>
</dbReference>
<dbReference type="HOGENOM" id="CLU_001201_0_2_6"/>
<dbReference type="OrthoDB" id="9806583at2"/>
<dbReference type="UniPathway" id="UPA00053">
    <property type="reaction ID" value="UER00085"/>
</dbReference>
<dbReference type="Proteomes" id="UP000000684">
    <property type="component" value="Chromosome"/>
</dbReference>
<dbReference type="GO" id="GO:0005737">
    <property type="term" value="C:cytoplasm"/>
    <property type="evidence" value="ECO:0007669"/>
    <property type="project" value="UniProtKB-SubCell"/>
</dbReference>
<dbReference type="GO" id="GO:0003856">
    <property type="term" value="F:3-dehydroquinate synthase activity"/>
    <property type="evidence" value="ECO:0007669"/>
    <property type="project" value="UniProtKB-UniRule"/>
</dbReference>
<dbReference type="GO" id="GO:0046872">
    <property type="term" value="F:metal ion binding"/>
    <property type="evidence" value="ECO:0007669"/>
    <property type="project" value="UniProtKB-KW"/>
</dbReference>
<dbReference type="GO" id="GO:0000166">
    <property type="term" value="F:nucleotide binding"/>
    <property type="evidence" value="ECO:0007669"/>
    <property type="project" value="UniProtKB-KW"/>
</dbReference>
<dbReference type="GO" id="GO:0008652">
    <property type="term" value="P:amino acid biosynthetic process"/>
    <property type="evidence" value="ECO:0007669"/>
    <property type="project" value="UniProtKB-KW"/>
</dbReference>
<dbReference type="GO" id="GO:0009073">
    <property type="term" value="P:aromatic amino acid family biosynthetic process"/>
    <property type="evidence" value="ECO:0007669"/>
    <property type="project" value="UniProtKB-KW"/>
</dbReference>
<dbReference type="GO" id="GO:0009423">
    <property type="term" value="P:chorismate biosynthetic process"/>
    <property type="evidence" value="ECO:0007669"/>
    <property type="project" value="UniProtKB-UniRule"/>
</dbReference>
<dbReference type="CDD" id="cd08195">
    <property type="entry name" value="DHQS"/>
    <property type="match status" value="1"/>
</dbReference>
<dbReference type="FunFam" id="1.20.1090.10:FF:000002">
    <property type="entry name" value="3-dehydroquinate synthase"/>
    <property type="match status" value="1"/>
</dbReference>
<dbReference type="FunFam" id="3.40.50.1970:FF:000001">
    <property type="entry name" value="3-dehydroquinate synthase"/>
    <property type="match status" value="1"/>
</dbReference>
<dbReference type="Gene3D" id="3.40.50.1970">
    <property type="match status" value="1"/>
</dbReference>
<dbReference type="Gene3D" id="1.20.1090.10">
    <property type="entry name" value="Dehydroquinate synthase-like - alpha domain"/>
    <property type="match status" value="1"/>
</dbReference>
<dbReference type="HAMAP" id="MF_00110">
    <property type="entry name" value="DHQ_synthase"/>
    <property type="match status" value="1"/>
</dbReference>
<dbReference type="InterPro" id="IPR050071">
    <property type="entry name" value="Dehydroquinate_synthase"/>
</dbReference>
<dbReference type="InterPro" id="IPR016037">
    <property type="entry name" value="DHQ_synth_AroB"/>
</dbReference>
<dbReference type="InterPro" id="IPR030963">
    <property type="entry name" value="DHQ_synth_fam"/>
</dbReference>
<dbReference type="InterPro" id="IPR030960">
    <property type="entry name" value="DHQS/DOIS_N"/>
</dbReference>
<dbReference type="InterPro" id="IPR056179">
    <property type="entry name" value="DHQS_C"/>
</dbReference>
<dbReference type="NCBIfam" id="TIGR01357">
    <property type="entry name" value="aroB"/>
    <property type="match status" value="1"/>
</dbReference>
<dbReference type="PANTHER" id="PTHR43622">
    <property type="entry name" value="3-DEHYDROQUINATE SYNTHASE"/>
    <property type="match status" value="1"/>
</dbReference>
<dbReference type="PANTHER" id="PTHR43622:SF7">
    <property type="entry name" value="3-DEHYDROQUINATE SYNTHASE, CHLOROPLASTIC"/>
    <property type="match status" value="1"/>
</dbReference>
<dbReference type="Pfam" id="PF01761">
    <property type="entry name" value="DHQ_synthase"/>
    <property type="match status" value="1"/>
</dbReference>
<dbReference type="Pfam" id="PF24621">
    <property type="entry name" value="DHQS_C"/>
    <property type="match status" value="1"/>
</dbReference>
<dbReference type="PIRSF" id="PIRSF001455">
    <property type="entry name" value="DHQ_synth"/>
    <property type="match status" value="1"/>
</dbReference>
<dbReference type="SUPFAM" id="SSF56796">
    <property type="entry name" value="Dehydroquinate synthase-like"/>
    <property type="match status" value="1"/>
</dbReference>
<name>AROB_SHEFN</name>
<gene>
    <name evidence="1" type="primary">aroB</name>
    <name type="ordered locus">Sfri_0376</name>
</gene>
<organism>
    <name type="scientific">Shewanella frigidimarina (strain NCIMB 400)</name>
    <dbReference type="NCBI Taxonomy" id="318167"/>
    <lineage>
        <taxon>Bacteria</taxon>
        <taxon>Pseudomonadati</taxon>
        <taxon>Pseudomonadota</taxon>
        <taxon>Gammaproteobacteria</taxon>
        <taxon>Alteromonadales</taxon>
        <taxon>Shewanellaceae</taxon>
        <taxon>Shewanella</taxon>
    </lineage>
</organism>
<evidence type="ECO:0000255" key="1">
    <source>
        <dbReference type="HAMAP-Rule" id="MF_00110"/>
    </source>
</evidence>
<accession>Q088S6</accession>
<feature type="chain" id="PRO_1000094610" description="3-dehydroquinate synthase">
    <location>
        <begin position="1"/>
        <end position="358"/>
    </location>
</feature>
<feature type="binding site" evidence="1">
    <location>
        <begin position="70"/>
        <end position="75"/>
    </location>
    <ligand>
        <name>NAD(+)</name>
        <dbReference type="ChEBI" id="CHEBI:57540"/>
    </ligand>
</feature>
<feature type="binding site" evidence="1">
    <location>
        <begin position="104"/>
        <end position="108"/>
    </location>
    <ligand>
        <name>NAD(+)</name>
        <dbReference type="ChEBI" id="CHEBI:57540"/>
    </ligand>
</feature>
<feature type="binding site" evidence="1">
    <location>
        <begin position="128"/>
        <end position="129"/>
    </location>
    <ligand>
        <name>NAD(+)</name>
        <dbReference type="ChEBI" id="CHEBI:57540"/>
    </ligand>
</feature>
<feature type="binding site" evidence="1">
    <location>
        <position position="141"/>
    </location>
    <ligand>
        <name>NAD(+)</name>
        <dbReference type="ChEBI" id="CHEBI:57540"/>
    </ligand>
</feature>
<feature type="binding site" evidence="1">
    <location>
        <position position="150"/>
    </location>
    <ligand>
        <name>NAD(+)</name>
        <dbReference type="ChEBI" id="CHEBI:57540"/>
    </ligand>
</feature>
<feature type="binding site" evidence="1">
    <location>
        <begin position="168"/>
        <end position="171"/>
    </location>
    <ligand>
        <name>NAD(+)</name>
        <dbReference type="ChEBI" id="CHEBI:57540"/>
    </ligand>
</feature>
<feature type="binding site" evidence="1">
    <location>
        <position position="183"/>
    </location>
    <ligand>
        <name>Zn(2+)</name>
        <dbReference type="ChEBI" id="CHEBI:29105"/>
    </ligand>
</feature>
<feature type="binding site" evidence="1">
    <location>
        <position position="246"/>
    </location>
    <ligand>
        <name>Zn(2+)</name>
        <dbReference type="ChEBI" id="CHEBI:29105"/>
    </ligand>
</feature>
<feature type="binding site" evidence="1">
    <location>
        <position position="263"/>
    </location>
    <ligand>
        <name>Zn(2+)</name>
        <dbReference type="ChEBI" id="CHEBI:29105"/>
    </ligand>
</feature>
<proteinExistence type="inferred from homology"/>
<reference key="1">
    <citation type="submission" date="2006-08" db="EMBL/GenBank/DDBJ databases">
        <title>Complete sequence of Shewanella frigidimarina NCIMB 400.</title>
        <authorList>
            <consortium name="US DOE Joint Genome Institute"/>
            <person name="Copeland A."/>
            <person name="Lucas S."/>
            <person name="Lapidus A."/>
            <person name="Barry K."/>
            <person name="Detter J.C."/>
            <person name="Glavina del Rio T."/>
            <person name="Hammon N."/>
            <person name="Israni S."/>
            <person name="Dalin E."/>
            <person name="Tice H."/>
            <person name="Pitluck S."/>
            <person name="Fredrickson J.K."/>
            <person name="Kolker E."/>
            <person name="McCuel L.A."/>
            <person name="DiChristina T."/>
            <person name="Nealson K.H."/>
            <person name="Newman D."/>
            <person name="Tiedje J.M."/>
            <person name="Zhou J."/>
            <person name="Romine M.F."/>
            <person name="Culley D.E."/>
            <person name="Serres M."/>
            <person name="Chertkov O."/>
            <person name="Brettin T."/>
            <person name="Bruce D."/>
            <person name="Han C."/>
            <person name="Tapia R."/>
            <person name="Gilna P."/>
            <person name="Schmutz J."/>
            <person name="Larimer F."/>
            <person name="Land M."/>
            <person name="Hauser L."/>
            <person name="Kyrpides N."/>
            <person name="Mikhailova N."/>
            <person name="Richardson P."/>
        </authorList>
    </citation>
    <scope>NUCLEOTIDE SEQUENCE [LARGE SCALE GENOMIC DNA]</scope>
    <source>
        <strain>NCIMB 400</strain>
    </source>
</reference>